<sequence length="192" mass="21548">MAFVAIEGIDGSGKSTVISLLEKKLPRVYATREPSSGPIGRLIKEWALKGGSVDPHVDALLFAADRIEHYKREIEPRVREGYIVISERYIESSIAYQGAAGVSREFVKYINSLVPKPDLTIILDVDPSIAEARIRQRGGAEKYEYLSFLRKVREIYLARAAEEGYPVIDASRRPEEVAADVAELIKRVVRFK</sequence>
<keyword id="KW-0067">ATP-binding</keyword>
<keyword id="KW-0418">Kinase</keyword>
<keyword id="KW-0545">Nucleotide biosynthesis</keyword>
<keyword id="KW-0547">Nucleotide-binding</keyword>
<keyword id="KW-1185">Reference proteome</keyword>
<keyword id="KW-0808">Transferase</keyword>
<organism>
    <name type="scientific">Pyrobaculum aerophilum (strain ATCC 51768 / DSM 7523 / JCM 9630 / CIP 104966 / NBRC 100827 / IM2)</name>
    <dbReference type="NCBI Taxonomy" id="178306"/>
    <lineage>
        <taxon>Archaea</taxon>
        <taxon>Thermoproteota</taxon>
        <taxon>Thermoprotei</taxon>
        <taxon>Thermoproteales</taxon>
        <taxon>Thermoproteaceae</taxon>
        <taxon>Pyrobaculum</taxon>
    </lineage>
</organism>
<dbReference type="EC" id="2.7.4.9" evidence="1"/>
<dbReference type="EMBL" id="AE009441">
    <property type="protein sequence ID" value="AAL63161.1"/>
    <property type="molecule type" value="Genomic_DNA"/>
</dbReference>
<dbReference type="RefSeq" id="WP_011007633.1">
    <property type="nucleotide sequence ID" value="NC_003364.1"/>
</dbReference>
<dbReference type="SMR" id="Q8ZY35"/>
<dbReference type="FunCoup" id="Q8ZY35">
    <property type="interactions" value="114"/>
</dbReference>
<dbReference type="STRING" id="178306.PAE0964"/>
<dbReference type="EnsemblBacteria" id="AAL63161">
    <property type="protein sequence ID" value="AAL63161"/>
    <property type="gene ID" value="PAE0964"/>
</dbReference>
<dbReference type="GeneID" id="1465396"/>
<dbReference type="KEGG" id="pai:PAE0964"/>
<dbReference type="PATRIC" id="fig|178306.9.peg.713"/>
<dbReference type="eggNOG" id="arCOG01891">
    <property type="taxonomic scope" value="Archaea"/>
</dbReference>
<dbReference type="HOGENOM" id="CLU_049131_0_2_2"/>
<dbReference type="InParanoid" id="Q8ZY35"/>
<dbReference type="Proteomes" id="UP000002439">
    <property type="component" value="Chromosome"/>
</dbReference>
<dbReference type="GO" id="GO:0005737">
    <property type="term" value="C:cytoplasm"/>
    <property type="evidence" value="ECO:0000318"/>
    <property type="project" value="GO_Central"/>
</dbReference>
<dbReference type="GO" id="GO:0005524">
    <property type="term" value="F:ATP binding"/>
    <property type="evidence" value="ECO:0007669"/>
    <property type="project" value="UniProtKB-UniRule"/>
</dbReference>
<dbReference type="GO" id="GO:0004798">
    <property type="term" value="F:dTMP kinase activity"/>
    <property type="evidence" value="ECO:0000318"/>
    <property type="project" value="GO_Central"/>
</dbReference>
<dbReference type="GO" id="GO:0006233">
    <property type="term" value="P:dTDP biosynthetic process"/>
    <property type="evidence" value="ECO:0000318"/>
    <property type="project" value="GO_Central"/>
</dbReference>
<dbReference type="GO" id="GO:0006235">
    <property type="term" value="P:dTTP biosynthetic process"/>
    <property type="evidence" value="ECO:0000318"/>
    <property type="project" value="GO_Central"/>
</dbReference>
<dbReference type="GO" id="GO:0006227">
    <property type="term" value="P:dUDP biosynthetic process"/>
    <property type="evidence" value="ECO:0000318"/>
    <property type="project" value="GO_Central"/>
</dbReference>
<dbReference type="CDD" id="cd01672">
    <property type="entry name" value="TMPK"/>
    <property type="match status" value="1"/>
</dbReference>
<dbReference type="FunFam" id="3.40.50.300:FF:000225">
    <property type="entry name" value="Thymidylate kinase"/>
    <property type="match status" value="1"/>
</dbReference>
<dbReference type="Gene3D" id="3.40.50.300">
    <property type="entry name" value="P-loop containing nucleotide triphosphate hydrolases"/>
    <property type="match status" value="1"/>
</dbReference>
<dbReference type="HAMAP" id="MF_00165">
    <property type="entry name" value="Thymidylate_kinase"/>
    <property type="match status" value="1"/>
</dbReference>
<dbReference type="InterPro" id="IPR027417">
    <property type="entry name" value="P-loop_NTPase"/>
</dbReference>
<dbReference type="InterPro" id="IPR039430">
    <property type="entry name" value="Thymidylate_kin-like_dom"/>
</dbReference>
<dbReference type="InterPro" id="IPR018095">
    <property type="entry name" value="Thymidylate_kin_CS"/>
</dbReference>
<dbReference type="InterPro" id="IPR018094">
    <property type="entry name" value="Thymidylate_kinase"/>
</dbReference>
<dbReference type="NCBIfam" id="TIGR00041">
    <property type="entry name" value="DTMP_kinase"/>
    <property type="match status" value="1"/>
</dbReference>
<dbReference type="PANTHER" id="PTHR10344">
    <property type="entry name" value="THYMIDYLATE KINASE"/>
    <property type="match status" value="1"/>
</dbReference>
<dbReference type="PANTHER" id="PTHR10344:SF4">
    <property type="entry name" value="UMP-CMP KINASE 2, MITOCHONDRIAL"/>
    <property type="match status" value="1"/>
</dbReference>
<dbReference type="Pfam" id="PF02223">
    <property type="entry name" value="Thymidylate_kin"/>
    <property type="match status" value="1"/>
</dbReference>
<dbReference type="SUPFAM" id="SSF52540">
    <property type="entry name" value="P-loop containing nucleoside triphosphate hydrolases"/>
    <property type="match status" value="1"/>
</dbReference>
<dbReference type="PROSITE" id="PS01331">
    <property type="entry name" value="THYMIDYLATE_KINASE"/>
    <property type="match status" value="1"/>
</dbReference>
<reference key="1">
    <citation type="journal article" date="2002" name="Proc. Natl. Acad. Sci. U.S.A.">
        <title>Genome sequence of the hyperthermophilic crenarchaeon Pyrobaculum aerophilum.</title>
        <authorList>
            <person name="Fitz-Gibbon S.T."/>
            <person name="Ladner H."/>
            <person name="Kim U.-J."/>
            <person name="Stetter K.O."/>
            <person name="Simon M.I."/>
            <person name="Miller J.H."/>
        </authorList>
    </citation>
    <scope>NUCLEOTIDE SEQUENCE [LARGE SCALE GENOMIC DNA]</scope>
    <source>
        <strain>ATCC 51768 / DSM 7523 / JCM 9630 / CIP 104966 / NBRC 100827 / IM2</strain>
    </source>
</reference>
<proteinExistence type="inferred from homology"/>
<protein>
    <recommendedName>
        <fullName evidence="1">Probable thymidylate kinase</fullName>
        <ecNumber evidence="1">2.7.4.9</ecNumber>
    </recommendedName>
    <alternativeName>
        <fullName evidence="1">dTMP kinase</fullName>
    </alternativeName>
</protein>
<accession>Q8ZY35</accession>
<feature type="chain" id="PRO_0000155393" description="Probable thymidylate kinase">
    <location>
        <begin position="1"/>
        <end position="192"/>
    </location>
</feature>
<feature type="binding site" evidence="1">
    <location>
        <begin position="8"/>
        <end position="15"/>
    </location>
    <ligand>
        <name>ATP</name>
        <dbReference type="ChEBI" id="CHEBI:30616"/>
    </ligand>
</feature>
<gene>
    <name evidence="1" type="primary">tmk</name>
    <name type="ordered locus">PAE0964</name>
</gene>
<comment type="catalytic activity">
    <reaction evidence="1">
        <text>dTMP + ATP = dTDP + ADP</text>
        <dbReference type="Rhea" id="RHEA:13517"/>
        <dbReference type="ChEBI" id="CHEBI:30616"/>
        <dbReference type="ChEBI" id="CHEBI:58369"/>
        <dbReference type="ChEBI" id="CHEBI:63528"/>
        <dbReference type="ChEBI" id="CHEBI:456216"/>
        <dbReference type="EC" id="2.7.4.9"/>
    </reaction>
</comment>
<comment type="similarity">
    <text evidence="1">Belongs to the thymidylate kinase family.</text>
</comment>
<name>KTHY_PYRAE</name>
<evidence type="ECO:0000255" key="1">
    <source>
        <dbReference type="HAMAP-Rule" id="MF_00165"/>
    </source>
</evidence>